<gene>
    <name evidence="1" type="primary">fcl</name>
    <name type="synonym">wcaG</name>
    <name type="synonym">yefB</name>
    <name type="ordered locus">b2052</name>
    <name type="ordered locus">JW2037</name>
</gene>
<dbReference type="EC" id="1.1.1.271" evidence="1 2 3 4"/>
<dbReference type="EMBL" id="U38473">
    <property type="protein sequence ID" value="AAC77843.1"/>
    <property type="molecule type" value="Genomic_DNA"/>
</dbReference>
<dbReference type="EMBL" id="U00096">
    <property type="protein sequence ID" value="AAC75113.1"/>
    <property type="molecule type" value="Genomic_DNA"/>
</dbReference>
<dbReference type="EMBL" id="AP009048">
    <property type="protein sequence ID" value="BAA15908.1"/>
    <property type="molecule type" value="Genomic_DNA"/>
</dbReference>
<dbReference type="PIR" id="C64971">
    <property type="entry name" value="C64971"/>
</dbReference>
<dbReference type="RefSeq" id="NP_416556.1">
    <property type="nucleotide sequence ID" value="NC_000913.3"/>
</dbReference>
<dbReference type="RefSeq" id="WP_000043654.1">
    <property type="nucleotide sequence ID" value="NZ_LN832404.1"/>
</dbReference>
<dbReference type="PDB" id="1BSV">
    <property type="method" value="X-ray"/>
    <property type="resolution" value="2.20 A"/>
    <property type="chains" value="A=1-321"/>
</dbReference>
<dbReference type="PDB" id="1BWS">
    <property type="method" value="X-ray"/>
    <property type="resolution" value="2.20 A"/>
    <property type="chains" value="A=1-321"/>
</dbReference>
<dbReference type="PDB" id="1E6U">
    <property type="method" value="X-ray"/>
    <property type="resolution" value="1.45 A"/>
    <property type="chains" value="A=1-321"/>
</dbReference>
<dbReference type="PDB" id="1E7Q">
    <property type="method" value="X-ray"/>
    <property type="resolution" value="1.60 A"/>
    <property type="chains" value="A=1-321"/>
</dbReference>
<dbReference type="PDB" id="1E7R">
    <property type="method" value="X-ray"/>
    <property type="resolution" value="1.60 A"/>
    <property type="chains" value="A=1-321"/>
</dbReference>
<dbReference type="PDB" id="1E7S">
    <property type="method" value="X-ray"/>
    <property type="resolution" value="1.50 A"/>
    <property type="chains" value="A=1-321"/>
</dbReference>
<dbReference type="PDB" id="1FXS">
    <property type="method" value="X-ray"/>
    <property type="resolution" value="2.30 A"/>
    <property type="chains" value="A=1-321"/>
</dbReference>
<dbReference type="PDB" id="1GFS">
    <property type="method" value="X-ray"/>
    <property type="resolution" value="2.20 A"/>
    <property type="chains" value="A=1-321"/>
</dbReference>
<dbReference type="PDBsum" id="1BSV"/>
<dbReference type="PDBsum" id="1BWS"/>
<dbReference type="PDBsum" id="1E6U"/>
<dbReference type="PDBsum" id="1E7Q"/>
<dbReference type="PDBsum" id="1E7R"/>
<dbReference type="PDBsum" id="1E7S"/>
<dbReference type="PDBsum" id="1FXS"/>
<dbReference type="PDBsum" id="1GFS"/>
<dbReference type="SMR" id="P32055"/>
<dbReference type="BioGRID" id="4259691">
    <property type="interactions" value="222"/>
</dbReference>
<dbReference type="FunCoup" id="P32055">
    <property type="interactions" value="420"/>
</dbReference>
<dbReference type="IntAct" id="P32055">
    <property type="interactions" value="2"/>
</dbReference>
<dbReference type="STRING" id="511145.b2052"/>
<dbReference type="DrugBank" id="DB02897">
    <property type="generic name" value="Acetylphosphate"/>
</dbReference>
<dbReference type="DrugBank" id="DB03461">
    <property type="generic name" value="Nicotinamide adenine dinucleotide phosphate"/>
</dbReference>
<dbReference type="PaxDb" id="511145-b2052"/>
<dbReference type="EnsemblBacteria" id="AAC75113">
    <property type="protein sequence ID" value="AAC75113"/>
    <property type="gene ID" value="b2052"/>
</dbReference>
<dbReference type="GeneID" id="946563"/>
<dbReference type="KEGG" id="ecj:JW2037"/>
<dbReference type="KEGG" id="eco:b2052"/>
<dbReference type="KEGG" id="ecoc:C3026_11550"/>
<dbReference type="PATRIC" id="fig|1411691.4.peg.199"/>
<dbReference type="EchoBASE" id="EB1736"/>
<dbReference type="eggNOG" id="COG0451">
    <property type="taxonomic scope" value="Bacteria"/>
</dbReference>
<dbReference type="HOGENOM" id="CLU_007383_18_0_6"/>
<dbReference type="InParanoid" id="P32055"/>
<dbReference type="OMA" id="HPSNYGY"/>
<dbReference type="OrthoDB" id="9811425at2"/>
<dbReference type="PhylomeDB" id="P32055"/>
<dbReference type="BioCyc" id="EcoCyc:FCL-MONOMER"/>
<dbReference type="BioCyc" id="MetaCyc:FCL-MONOMER"/>
<dbReference type="BRENDA" id="1.1.1.271">
    <property type="organism ID" value="2026"/>
</dbReference>
<dbReference type="SABIO-RK" id="P32055"/>
<dbReference type="UniPathway" id="UPA00128">
    <property type="reaction ID" value="UER00191"/>
</dbReference>
<dbReference type="UniPathway" id="UPA00980"/>
<dbReference type="EvolutionaryTrace" id="P32055"/>
<dbReference type="PRO" id="PR:P32055"/>
<dbReference type="Proteomes" id="UP000000625">
    <property type="component" value="Chromosome"/>
</dbReference>
<dbReference type="GO" id="GO:0005737">
    <property type="term" value="C:cytoplasm"/>
    <property type="evidence" value="ECO:0007669"/>
    <property type="project" value="UniProtKB-SubCell"/>
</dbReference>
<dbReference type="GO" id="GO:0050577">
    <property type="term" value="F:GDP-L-fucose synthase activity"/>
    <property type="evidence" value="ECO:0000314"/>
    <property type="project" value="EcoCyc"/>
</dbReference>
<dbReference type="GO" id="GO:0016853">
    <property type="term" value="F:isomerase activity"/>
    <property type="evidence" value="ECO:0007669"/>
    <property type="project" value="UniProtKB-KW"/>
</dbReference>
<dbReference type="GO" id="GO:0070401">
    <property type="term" value="F:NADP+ binding"/>
    <property type="evidence" value="ECO:0007669"/>
    <property type="project" value="UniProtKB-UniRule"/>
</dbReference>
<dbReference type="GO" id="GO:0042803">
    <property type="term" value="F:protein homodimerization activity"/>
    <property type="evidence" value="ECO:0000314"/>
    <property type="project" value="EcoCyc"/>
</dbReference>
<dbReference type="GO" id="GO:0042351">
    <property type="term" value="P:'de novo' GDP-L-fucose biosynthetic process"/>
    <property type="evidence" value="ECO:0007669"/>
    <property type="project" value="UniProtKB-UniRule"/>
</dbReference>
<dbReference type="GO" id="GO:0009242">
    <property type="term" value="P:colanic acid biosynthetic process"/>
    <property type="evidence" value="ECO:0007669"/>
    <property type="project" value="UniProtKB-UniPathway"/>
</dbReference>
<dbReference type="CDD" id="cd05239">
    <property type="entry name" value="GDP_FS_SDR_e"/>
    <property type="match status" value="1"/>
</dbReference>
<dbReference type="FunFam" id="3.40.50.720:FF:000101">
    <property type="entry name" value="GDP-L-fucose synthase"/>
    <property type="match status" value="1"/>
</dbReference>
<dbReference type="Gene3D" id="3.40.50.720">
    <property type="entry name" value="NAD(P)-binding Rossmann-like Domain"/>
    <property type="match status" value="1"/>
</dbReference>
<dbReference type="Gene3D" id="3.90.25.10">
    <property type="entry name" value="UDP-galactose 4-epimerase, domain 1"/>
    <property type="match status" value="1"/>
</dbReference>
<dbReference type="HAMAP" id="MF_00956">
    <property type="entry name" value="GDP_fucose_synth"/>
    <property type="match status" value="1"/>
</dbReference>
<dbReference type="InterPro" id="IPR001509">
    <property type="entry name" value="Epimerase_deHydtase"/>
</dbReference>
<dbReference type="InterPro" id="IPR028614">
    <property type="entry name" value="GDP_fucose/colitose_synth"/>
</dbReference>
<dbReference type="InterPro" id="IPR036291">
    <property type="entry name" value="NAD(P)-bd_dom_sf"/>
</dbReference>
<dbReference type="PANTHER" id="PTHR43238">
    <property type="entry name" value="GDP-L-FUCOSE SYNTHASE"/>
    <property type="match status" value="1"/>
</dbReference>
<dbReference type="PANTHER" id="PTHR43238:SF1">
    <property type="entry name" value="GDP-L-FUCOSE SYNTHASE"/>
    <property type="match status" value="1"/>
</dbReference>
<dbReference type="Pfam" id="PF01370">
    <property type="entry name" value="Epimerase"/>
    <property type="match status" value="1"/>
</dbReference>
<dbReference type="SUPFAM" id="SSF51735">
    <property type="entry name" value="NAD(P)-binding Rossmann-fold domains"/>
    <property type="match status" value="1"/>
</dbReference>
<accession>P32055</accession>
<accession>P76382</accession>
<feature type="chain" id="PRO_0000174358" description="GDP-L-fucose synthase">
    <location>
        <begin position="1"/>
        <end position="321"/>
    </location>
</feature>
<feature type="active site" description="Proton donor/acceptor" evidence="1 3">
    <location>
        <position position="136"/>
    </location>
</feature>
<feature type="binding site" evidence="1 3 5 6">
    <location>
        <begin position="10"/>
        <end position="16"/>
    </location>
    <ligand>
        <name>NADP(+)</name>
        <dbReference type="ChEBI" id="CHEBI:58349"/>
    </ligand>
</feature>
<feature type="binding site" evidence="1 3 5 6">
    <location>
        <begin position="36"/>
        <end position="41"/>
    </location>
    <ligand>
        <name>NADP(+)</name>
        <dbReference type="ChEBI" id="CHEBI:58349"/>
    </ligand>
</feature>
<feature type="binding site" evidence="1 3 5 6">
    <location>
        <begin position="105"/>
        <end position="108"/>
    </location>
    <ligand>
        <name>NADP(+)</name>
        <dbReference type="ChEBI" id="CHEBI:58349"/>
    </ligand>
</feature>
<feature type="binding site" evidence="1 3 5 6">
    <location>
        <position position="140"/>
    </location>
    <ligand>
        <name>NADP(+)</name>
        <dbReference type="ChEBI" id="CHEBI:58349"/>
    </ligand>
</feature>
<feature type="binding site" evidence="1 3 5 6">
    <location>
        <begin position="163"/>
        <end position="166"/>
    </location>
    <ligand>
        <name>NADP(+)</name>
        <dbReference type="ChEBI" id="CHEBI:58349"/>
    </ligand>
</feature>
<feature type="binding site" evidence="1 3 5 6">
    <location>
        <position position="179"/>
    </location>
    <ligand>
        <name>NADP(+)</name>
        <dbReference type="ChEBI" id="CHEBI:58349"/>
    </ligand>
</feature>
<feature type="binding site" evidence="7">
    <location>
        <position position="187"/>
    </location>
    <ligand>
        <name>substrate</name>
    </ligand>
</feature>
<feature type="binding site" evidence="1">
    <location>
        <position position="202"/>
    </location>
    <ligand>
        <name>substrate</name>
    </ligand>
</feature>
<feature type="binding site" evidence="1">
    <location>
        <position position="209"/>
    </location>
    <ligand>
        <name>substrate</name>
    </ligand>
</feature>
<feature type="binding site" evidence="1">
    <location>
        <position position="278"/>
    </location>
    <ligand>
        <name>substrate</name>
    </ligand>
</feature>
<feature type="site" description="Important for catalytic activity">
    <location>
        <position position="107"/>
    </location>
</feature>
<feature type="site" description="Important for catalytic activity">
    <location>
        <position position="109"/>
    </location>
</feature>
<feature type="site" description="Lowers pKa of active site Tyr">
    <location>
        <position position="140"/>
    </location>
</feature>
<feature type="mutagenesis site" description="Nearly abolishes catalytic activity. Minor effect of affinity for NADPH and substrate." evidence="3">
    <original>S</original>
    <variation>A</variation>
    <location>
        <position position="107"/>
    </location>
</feature>
<feature type="mutagenesis site" description="Nearly abolishes catalytic activity.">
    <original>C</original>
    <variation>A</variation>
    <location>
        <position position="109"/>
    </location>
</feature>
<feature type="mutagenesis site" description="Abolishes enzyme activity." evidence="3">
    <original>Y</original>
    <variation>E</variation>
    <location>
        <position position="136"/>
    </location>
</feature>
<feature type="mutagenesis site" description="Reduces catalytic activity 20-fold." evidence="3">
    <original>K</original>
    <variation>R</variation>
    <location>
        <position position="140"/>
    </location>
</feature>
<feature type="mutagenesis site" description="Nearly abolishes catalytic activity." evidence="3">
    <original>K</original>
    <variation>S</variation>
    <location>
        <position position="140"/>
    </location>
</feature>
<feature type="mutagenesis site" description="Nearly abolishes catalytic activity." evidence="3">
    <original>H</original>
    <variation>N</variation>
    <location>
        <position position="179"/>
    </location>
</feature>
<feature type="mutagenesis site" description="Decreases affinity for the substrate GDP-4-keto-6-deoxymannose." evidence="3">
    <original>R</original>
    <variation>A</variation>
    <location>
        <position position="187"/>
    </location>
</feature>
<feature type="sequence conflict" description="In Ref. 1; no nucleotide entry and 2; AAC77843." evidence="7" ref="1 2">
    <original>EL</original>
    <variation>DV</variation>
    <location>
        <begin position="255"/>
        <end position="256"/>
    </location>
</feature>
<feature type="strand" evidence="9">
    <location>
        <begin position="4"/>
        <end position="9"/>
    </location>
</feature>
<feature type="turn" evidence="9">
    <location>
        <begin position="10"/>
        <end position="12"/>
    </location>
</feature>
<feature type="helix" evidence="9">
    <location>
        <begin position="14"/>
        <end position="23"/>
    </location>
</feature>
<feature type="strand" evidence="9">
    <location>
        <begin position="29"/>
        <end position="32"/>
    </location>
</feature>
<feature type="turn" evidence="9">
    <location>
        <begin position="36"/>
        <end position="38"/>
    </location>
</feature>
<feature type="helix" evidence="9">
    <location>
        <begin position="44"/>
        <end position="54"/>
    </location>
</feature>
<feature type="strand" evidence="9">
    <location>
        <begin position="57"/>
        <end position="61"/>
    </location>
</feature>
<feature type="helix" evidence="9">
    <location>
        <begin position="69"/>
        <end position="74"/>
    </location>
</feature>
<feature type="helix" evidence="9">
    <location>
        <begin position="76"/>
        <end position="96"/>
    </location>
</feature>
<feature type="strand" evidence="9">
    <location>
        <begin position="101"/>
        <end position="105"/>
    </location>
</feature>
<feature type="helix" evidence="9">
    <location>
        <begin position="108"/>
        <end position="110"/>
    </location>
</feature>
<feature type="strand" evidence="9">
    <location>
        <begin position="117"/>
        <end position="119"/>
    </location>
</feature>
<feature type="helix" evidence="9">
    <location>
        <begin position="121"/>
        <end position="123"/>
    </location>
</feature>
<feature type="helix" evidence="9">
    <location>
        <begin position="131"/>
        <end position="133"/>
    </location>
</feature>
<feature type="helix" evidence="9">
    <location>
        <begin position="134"/>
        <end position="154"/>
    </location>
</feature>
<feature type="strand" evidence="9">
    <location>
        <begin position="157"/>
        <end position="163"/>
    </location>
</feature>
<feature type="strand" evidence="9">
    <location>
        <begin position="165"/>
        <end position="168"/>
    </location>
</feature>
<feature type="helix" evidence="9">
    <location>
        <begin position="180"/>
        <end position="194"/>
    </location>
</feature>
<feature type="strand" evidence="9">
    <location>
        <begin position="197"/>
        <end position="203"/>
    </location>
</feature>
<feature type="strand" evidence="9">
    <location>
        <begin position="211"/>
        <end position="213"/>
    </location>
</feature>
<feature type="helix" evidence="9">
    <location>
        <begin position="214"/>
        <end position="226"/>
    </location>
</feature>
<feature type="helix" evidence="9">
    <location>
        <begin position="229"/>
        <end position="234"/>
    </location>
</feature>
<feature type="strand" evidence="9">
    <location>
        <begin position="243"/>
        <end position="246"/>
    </location>
</feature>
<feature type="helix" evidence="9">
    <location>
        <begin position="253"/>
        <end position="264"/>
    </location>
</feature>
<feature type="strand" evidence="9">
    <location>
        <begin position="268"/>
        <end position="273"/>
    </location>
</feature>
<feature type="strand" evidence="8">
    <location>
        <begin position="281"/>
        <end position="283"/>
    </location>
</feature>
<feature type="helix" evidence="9">
    <location>
        <begin position="288"/>
        <end position="292"/>
    </location>
</feature>
<feature type="helix" evidence="9">
    <location>
        <begin position="301"/>
        <end position="314"/>
    </location>
</feature>
<proteinExistence type="evidence at protein level"/>
<organism>
    <name type="scientific">Escherichia coli (strain K12)</name>
    <dbReference type="NCBI Taxonomy" id="83333"/>
    <lineage>
        <taxon>Bacteria</taxon>
        <taxon>Pseudomonadati</taxon>
        <taxon>Pseudomonadota</taxon>
        <taxon>Gammaproteobacteria</taxon>
        <taxon>Enterobacterales</taxon>
        <taxon>Enterobacteriaceae</taxon>
        <taxon>Escherichia</taxon>
    </lineage>
</organism>
<comment type="function">
    <text evidence="1 2 3 4">Catalyzes the two-step NADP-dependent conversion of GDP-4-dehydro-6-deoxy-D-mannose to GDP-fucose, involving an epimerase and a reductase reaction.</text>
</comment>
<comment type="catalytic activity">
    <reaction evidence="1 2 3 4">
        <text>GDP-beta-L-fucose + NADP(+) = GDP-4-dehydro-alpha-D-rhamnose + NADPH + H(+)</text>
        <dbReference type="Rhea" id="RHEA:18885"/>
        <dbReference type="ChEBI" id="CHEBI:15378"/>
        <dbReference type="ChEBI" id="CHEBI:57273"/>
        <dbReference type="ChEBI" id="CHEBI:57783"/>
        <dbReference type="ChEBI" id="CHEBI:57964"/>
        <dbReference type="ChEBI" id="CHEBI:58349"/>
        <dbReference type="EC" id="1.1.1.271"/>
    </reaction>
</comment>
<comment type="activity regulation">
    <text evidence="2">Subject to product inhibition by NADP and GDP-fucose.</text>
</comment>
<comment type="biophysicochemical properties">
    <kinetics>
        <KM evidence="2 3">9 uM for NADPH</KM>
        <KM evidence="2 3">109 uM for NADH</KM>
        <KM evidence="2 3">29 uM for GDP-4-keto-6-deoxymannose</KM>
        <Vmax evidence="2 3">363.5 umol/min/mg enzyme</Vmax>
    </kinetics>
    <phDependence>
        <text evidence="2 3">Optimum pH is 6-6.5.</text>
    </phDependence>
</comment>
<comment type="pathway">
    <text evidence="1 4">Nucleotide-sugar biosynthesis; GDP-L-fucose biosynthesis via de novo pathway; GDP-L-fucose from GDP-alpha-D-mannose: step 2/2.</text>
</comment>
<comment type="pathway">
    <text evidence="4">Exopolysaccharide biosynthesis; colanic acid biosynthesis.</text>
</comment>
<comment type="subunit">
    <text evidence="3 5 6">Homodimer.</text>
</comment>
<comment type="subcellular location">
    <subcellularLocation>
        <location>Cytoplasm</location>
    </subcellularLocation>
</comment>
<comment type="similarity">
    <text evidence="1">Belongs to the NAD(P)-dependent epimerase/dehydratase family. Fucose synthase subfamily.</text>
</comment>
<reference key="1">
    <citation type="journal article" date="1994" name="Mol. Biol. Evol.">
        <title>Evidence for effect of random genetic drift on G+C content after lateral transfer of fucose pathway genes to Escherichia coli K-12.</title>
        <authorList>
            <person name="Aoyama K."/>
            <person name="Haase A.M."/>
            <person name="Reeves P.R."/>
        </authorList>
    </citation>
    <scope>NUCLEOTIDE SEQUENCE [GENOMIC DNA]</scope>
    <source>
        <strain>K12</strain>
    </source>
</reference>
<reference key="2">
    <citation type="journal article" date="1996" name="J. Bacteriol.">
        <title>Organization of the Escherichia coli K-12 gene cluster responsible for production of the extracellular polysaccharide colanic acid.</title>
        <authorList>
            <person name="Stevenson G."/>
            <person name="Andrianopoulos K."/>
            <person name="Hobbs M."/>
            <person name="Reeves P.R."/>
        </authorList>
    </citation>
    <scope>NUCLEOTIDE SEQUENCE [GENOMIC DNA]</scope>
    <source>
        <strain>K12</strain>
    </source>
</reference>
<reference key="3">
    <citation type="journal article" date="1996" name="DNA Res.">
        <title>A 460-kb DNA sequence of the Escherichia coli K-12 genome corresponding to the 40.1-50.0 min region on the linkage map.</title>
        <authorList>
            <person name="Itoh T."/>
            <person name="Aiba H."/>
            <person name="Baba T."/>
            <person name="Fujita K."/>
            <person name="Hayashi K."/>
            <person name="Inada T."/>
            <person name="Isono K."/>
            <person name="Kasai H."/>
            <person name="Kimura S."/>
            <person name="Kitakawa M."/>
            <person name="Kitagawa M."/>
            <person name="Makino K."/>
            <person name="Miki T."/>
            <person name="Mizobuchi K."/>
            <person name="Mori H."/>
            <person name="Mori T."/>
            <person name="Motomura K."/>
            <person name="Nakade S."/>
            <person name="Nakamura Y."/>
            <person name="Nashimoto H."/>
            <person name="Nishio Y."/>
            <person name="Oshima T."/>
            <person name="Saito N."/>
            <person name="Sampei G."/>
            <person name="Seki Y."/>
            <person name="Sivasundaram S."/>
            <person name="Tagami H."/>
            <person name="Takeda J."/>
            <person name="Takemoto K."/>
            <person name="Wada C."/>
            <person name="Yamamoto Y."/>
            <person name="Horiuchi T."/>
        </authorList>
    </citation>
    <scope>NUCLEOTIDE SEQUENCE [LARGE SCALE GENOMIC DNA]</scope>
    <source>
        <strain>K12 / W3110 / ATCC 27325 / DSM 5911</strain>
    </source>
</reference>
<reference key="4">
    <citation type="journal article" date="1997" name="Science">
        <title>The complete genome sequence of Escherichia coli K-12.</title>
        <authorList>
            <person name="Blattner F.R."/>
            <person name="Plunkett G. III"/>
            <person name="Bloch C.A."/>
            <person name="Perna N.T."/>
            <person name="Burland V."/>
            <person name="Riley M."/>
            <person name="Collado-Vides J."/>
            <person name="Glasner J.D."/>
            <person name="Rode C.K."/>
            <person name="Mayhew G.F."/>
            <person name="Gregor J."/>
            <person name="Davis N.W."/>
            <person name="Kirkpatrick H.A."/>
            <person name="Goeden M.A."/>
            <person name="Rose D.J."/>
            <person name="Mau B."/>
            <person name="Shao Y."/>
        </authorList>
    </citation>
    <scope>NUCLEOTIDE SEQUENCE [LARGE SCALE GENOMIC DNA]</scope>
    <source>
        <strain>K12 / MG1655 / ATCC 47076</strain>
    </source>
</reference>
<reference key="5">
    <citation type="journal article" date="2006" name="Mol. Syst. Biol.">
        <title>Highly accurate genome sequences of Escherichia coli K-12 strains MG1655 and W3110.</title>
        <authorList>
            <person name="Hayashi K."/>
            <person name="Morooka N."/>
            <person name="Yamamoto Y."/>
            <person name="Fujita K."/>
            <person name="Isono K."/>
            <person name="Choi S."/>
            <person name="Ohtsubo E."/>
            <person name="Baba T."/>
            <person name="Wanner B.L."/>
            <person name="Mori H."/>
            <person name="Horiuchi T."/>
        </authorList>
    </citation>
    <scope>NUCLEOTIDE SEQUENCE [LARGE SCALE GENOMIC DNA]</scope>
    <source>
        <strain>K12 / W3110 / ATCC 27325 / DSM 5911</strain>
    </source>
</reference>
<reference key="6">
    <citation type="journal article" date="1998" name="J. Bacteriol.">
        <title>Identification of the fucose synthetase gene in the colanic acid gene cluster of Escherichia coli K-12.</title>
        <authorList>
            <person name="Andrianopoulos K."/>
            <person name="Wang L."/>
            <person name="Reeves P.R."/>
        </authorList>
    </citation>
    <scope>FUNCTION</scope>
    <scope>CATALYTIC ACTIVITY</scope>
    <scope>PATHWAY</scope>
</reference>
<reference key="7">
    <citation type="journal article" date="1999" name="J. Biol. Chem.">
        <title>Stereochemical course and steady state mechanism of the reaction catalyzed by the GDP-fucose synthetase from Escherichia coli.</title>
        <authorList>
            <person name="Menon S."/>
            <person name="Stahl M."/>
            <person name="Kumar R."/>
            <person name="Xu G.Y."/>
            <person name="Sullivan F."/>
        </authorList>
    </citation>
    <scope>FUNCTION</scope>
    <scope>CATALYTIC ACTIVITY</scope>
    <scope>ACTIVITY REGULATION</scope>
    <scope>BIOPHYSICOCHEMICAL PROPERTIES</scope>
</reference>
<reference key="8">
    <citation type="journal article" date="1998" name="Structure">
        <title>GDP-4-keto-6-deoxy-D-mannose epimerase/reductase from Escherichia coli, a key enzyme in the biosynthesis of GDP-L-fucose, displays the structural characteristics of the RED protein homology superfamily.</title>
        <authorList>
            <person name="Rizzi M."/>
            <person name="Tonetti M."/>
            <person name="Vigevani P."/>
            <person name="Sturla L."/>
            <person name="Bisso A."/>
            <person name="Flora A.D."/>
            <person name="Bordo D."/>
            <person name="Bolognesi M."/>
        </authorList>
    </citation>
    <scope>X-RAY CRYSTALLOGRAPHY (2.20 ANGSTROMS) IN COMPLEX WITH NADP</scope>
    <scope>SUBUNIT</scope>
</reference>
<reference key="9">
    <citation type="journal article" date="1998" name="Structure">
        <title>GDP-fucose synthetase from Escherichia coli: structure of a unique member of the short-chain dehydrogenase/reductase family that catalyzes two distinct reactions at the same active site.</title>
        <authorList>
            <person name="Somers W.S."/>
            <person name="Stahl M.L."/>
            <person name="Sullivan F.X."/>
        </authorList>
    </citation>
    <scope>X-RAY CRYSTALLOGRAPHY (2.20 ANGSTROMS) IN COMPLEX WITH NADP</scope>
    <source>
        <strain>K12</strain>
    </source>
</reference>
<reference key="10">
    <citation type="journal article" date="2000" name="J. Mol. Biol.">
        <title>Probing the catalytic mechanism of GDP-4-keto-6-deoxy-d-mannose Epimerase/Reductase by kinetic and crystallographic characterization of site-specific mutants.</title>
        <authorList>
            <person name="Rosano C."/>
            <person name="Bisso A."/>
            <person name="Izzo G."/>
            <person name="Tonetti M."/>
            <person name="Sturla L."/>
            <person name="De Flora A."/>
            <person name="Bolognesi M."/>
        </authorList>
    </citation>
    <scope>X-RAY CRYSTALLOGRAPHY (1.45 ANGSTROMS) IN COMPLEX WITH NADP</scope>
    <scope>CATALYTIC ACTIVITY</scope>
    <scope>FUNCTION</scope>
    <scope>PREDICTED SUBSTRATE-BINDING SITES</scope>
    <scope>MUTAGENESIS OF SER-107; TYR-136; LYS-140; HIS-179 AND ARG-187</scope>
    <scope>BIOPHYSICOCHEMICAL PROPERTIES</scope>
    <scope>ACTIVE SITE</scope>
</reference>
<keyword id="KW-0002">3D-structure</keyword>
<keyword id="KW-0963">Cytoplasm</keyword>
<keyword id="KW-0413">Isomerase</keyword>
<keyword id="KW-0511">Multifunctional enzyme</keyword>
<keyword id="KW-0521">NADP</keyword>
<keyword id="KW-0560">Oxidoreductase</keyword>
<keyword id="KW-1185">Reference proteome</keyword>
<name>FCL_ECOLI</name>
<sequence length="321" mass="36141">MSKQRVFIAGHRGMVGSAIRRQLEQRGDVELVLRTRDELNLLDSRAVHDFFASERIDQVYLAAAKVGGIVANNTYPADFIYQNMMIESNIIHAAHQNDVNKLLFLGSSCIYPKLAKQPMAESELLQGTLEPTNEPYAIAKIAGIKLCESYNRQYGRDYRSVMPTNLYGPHDNFHPSNSHVIPALLRRFHEATAQNAPDVVVWGSGTPMREFLHVDDMAAASIHVMELAHEVWLENTQPMLSHINVGTGVDCTIRELAQTIAKVVGYKGRVVFDASKPDGTPRKLLDVTRLHQLGWYHEISLEAGLASTYQWFLENQDRFRG</sequence>
<evidence type="ECO:0000255" key="1">
    <source>
        <dbReference type="HAMAP-Rule" id="MF_00956"/>
    </source>
</evidence>
<evidence type="ECO:0000269" key="2">
    <source>
    </source>
</evidence>
<evidence type="ECO:0000269" key="3">
    <source>
    </source>
</evidence>
<evidence type="ECO:0000269" key="4">
    <source>
    </source>
</evidence>
<evidence type="ECO:0000269" key="5">
    <source>
    </source>
</evidence>
<evidence type="ECO:0000269" key="6">
    <source>
    </source>
</evidence>
<evidence type="ECO:0000305" key="7"/>
<evidence type="ECO:0007829" key="8">
    <source>
        <dbReference type="PDB" id="1BSV"/>
    </source>
</evidence>
<evidence type="ECO:0007829" key="9">
    <source>
        <dbReference type="PDB" id="1E6U"/>
    </source>
</evidence>
<protein>
    <recommendedName>
        <fullName evidence="1">GDP-L-fucose synthase</fullName>
        <ecNumber evidence="1 2 3 4">1.1.1.271</ecNumber>
    </recommendedName>
    <alternativeName>
        <fullName evidence="1">GDP-4-keto-6-deoxy-D-mannose-3,5-epimerase-4-reductase</fullName>
    </alternativeName>
</protein>